<dbReference type="EC" id="2.8.4.5"/>
<dbReference type="EMBL" id="BA000001">
    <property type="protein sequence ID" value="BAA30997.1"/>
    <property type="status" value="ALT_INIT"/>
    <property type="molecule type" value="Genomic_DNA"/>
</dbReference>
<dbReference type="PIR" id="F71200">
    <property type="entry name" value="F71200"/>
</dbReference>
<dbReference type="RefSeq" id="WP_048053502.1">
    <property type="nucleotide sequence ID" value="NC_000961.1"/>
</dbReference>
<dbReference type="SMR" id="O59545"/>
<dbReference type="STRING" id="70601.gene:9378881"/>
<dbReference type="EnsemblBacteria" id="BAA30997">
    <property type="protein sequence ID" value="BAA30997"/>
    <property type="gene ID" value="BAA30997"/>
</dbReference>
<dbReference type="GeneID" id="1442719"/>
<dbReference type="KEGG" id="pho:PH1875"/>
<dbReference type="eggNOG" id="arCOG01358">
    <property type="taxonomic scope" value="Archaea"/>
</dbReference>
<dbReference type="OrthoDB" id="372134at2157"/>
<dbReference type="Proteomes" id="UP000000752">
    <property type="component" value="Chromosome"/>
</dbReference>
<dbReference type="GO" id="GO:0051539">
    <property type="term" value="F:4 iron, 4 sulfur cluster binding"/>
    <property type="evidence" value="ECO:0007669"/>
    <property type="project" value="UniProtKB-KW"/>
</dbReference>
<dbReference type="GO" id="GO:0046872">
    <property type="term" value="F:metal ion binding"/>
    <property type="evidence" value="ECO:0007669"/>
    <property type="project" value="UniProtKB-KW"/>
</dbReference>
<dbReference type="GO" id="GO:0035598">
    <property type="term" value="F:N6-threonylcarbomyladenosine methylthiotransferase activity"/>
    <property type="evidence" value="ECO:0007669"/>
    <property type="project" value="InterPro"/>
</dbReference>
<dbReference type="GO" id="GO:0061712">
    <property type="term" value="F:tRNA (N(6)-L-threonylcarbamoyladenosine(37)-C(2))-methylthiotransferase"/>
    <property type="evidence" value="ECO:0007669"/>
    <property type="project" value="UniProtKB-EC"/>
</dbReference>
<dbReference type="FunFam" id="3.80.30.20:FF:000002">
    <property type="entry name" value="threonylcarbamoyladenosine tRNA methylthiotransferase isoform X2"/>
    <property type="match status" value="1"/>
</dbReference>
<dbReference type="Gene3D" id="3.40.50.12160">
    <property type="entry name" value="Methylthiotransferase, N-terminal domain"/>
    <property type="match status" value="1"/>
</dbReference>
<dbReference type="Gene3D" id="3.80.30.20">
    <property type="entry name" value="tm_1862 like domain"/>
    <property type="match status" value="1"/>
</dbReference>
<dbReference type="InterPro" id="IPR006638">
    <property type="entry name" value="Elp3/MiaA/NifB-like_rSAM"/>
</dbReference>
<dbReference type="InterPro" id="IPR005839">
    <property type="entry name" value="Methylthiotransferase"/>
</dbReference>
<dbReference type="InterPro" id="IPR020612">
    <property type="entry name" value="Methylthiotransferase_CS"/>
</dbReference>
<dbReference type="InterPro" id="IPR013848">
    <property type="entry name" value="Methylthiotransferase_N"/>
</dbReference>
<dbReference type="InterPro" id="IPR038135">
    <property type="entry name" value="Methylthiotransferase_N_sf"/>
</dbReference>
<dbReference type="InterPro" id="IPR006466">
    <property type="entry name" value="MiaB-like_arc_euk"/>
</dbReference>
<dbReference type="InterPro" id="IPR007197">
    <property type="entry name" value="rSAM"/>
</dbReference>
<dbReference type="InterPro" id="IPR023404">
    <property type="entry name" value="rSAM_horseshoe"/>
</dbReference>
<dbReference type="InterPro" id="IPR002792">
    <property type="entry name" value="TRAM_dom"/>
</dbReference>
<dbReference type="NCBIfam" id="TIGR01578">
    <property type="entry name" value="MiaB-like-B"/>
    <property type="match status" value="1"/>
</dbReference>
<dbReference type="NCBIfam" id="TIGR00089">
    <property type="entry name" value="MiaB/RimO family radical SAM methylthiotransferase"/>
    <property type="match status" value="1"/>
</dbReference>
<dbReference type="PANTHER" id="PTHR11918">
    <property type="entry name" value="RADICAL SAM PROTEINS"/>
    <property type="match status" value="1"/>
</dbReference>
<dbReference type="PANTHER" id="PTHR11918:SF45">
    <property type="entry name" value="THREONYLCARBAMOYLADENOSINE TRNA METHYLTHIOTRANSFERASE"/>
    <property type="match status" value="1"/>
</dbReference>
<dbReference type="Pfam" id="PF04055">
    <property type="entry name" value="Radical_SAM"/>
    <property type="match status" value="1"/>
</dbReference>
<dbReference type="Pfam" id="PF01938">
    <property type="entry name" value="TRAM"/>
    <property type="match status" value="1"/>
</dbReference>
<dbReference type="Pfam" id="PF00919">
    <property type="entry name" value="UPF0004"/>
    <property type="match status" value="1"/>
</dbReference>
<dbReference type="SFLD" id="SFLDG01082">
    <property type="entry name" value="B12-binding_domain_containing"/>
    <property type="match status" value="1"/>
</dbReference>
<dbReference type="SFLD" id="SFLDG01061">
    <property type="entry name" value="methylthiotransferase"/>
    <property type="match status" value="1"/>
</dbReference>
<dbReference type="SFLD" id="SFLDS00029">
    <property type="entry name" value="Radical_SAM"/>
    <property type="match status" value="1"/>
</dbReference>
<dbReference type="SMART" id="SM00729">
    <property type="entry name" value="Elp3"/>
    <property type="match status" value="1"/>
</dbReference>
<dbReference type="SUPFAM" id="SSF102114">
    <property type="entry name" value="Radical SAM enzymes"/>
    <property type="match status" value="1"/>
</dbReference>
<dbReference type="PROSITE" id="PS51449">
    <property type="entry name" value="MTTASE_N"/>
    <property type="match status" value="1"/>
</dbReference>
<dbReference type="PROSITE" id="PS01278">
    <property type="entry name" value="MTTASE_RADICAL"/>
    <property type="match status" value="1"/>
</dbReference>
<dbReference type="PROSITE" id="PS51918">
    <property type="entry name" value="RADICAL_SAM"/>
    <property type="match status" value="1"/>
</dbReference>
<dbReference type="PROSITE" id="PS50926">
    <property type="entry name" value="TRAM"/>
    <property type="match status" value="1"/>
</dbReference>
<comment type="function">
    <text evidence="1">Catalyzes the methylthiolation of N6-threonylcarbamoyladenosine (t(6)A), leading to the formation of 2-methylthio-N6-threonylcarbamoyladenosine (ms(2)t(6)A) at position 37 in tRNAs that read codons beginning with adenine.</text>
</comment>
<comment type="catalytic activity">
    <reaction evidence="1">
        <text>N(6)-L-threonylcarbamoyladenosine(37) in tRNA + (sulfur carrier)-SH + AH2 + 2 S-adenosyl-L-methionine = 2-methylsulfanyl-N(6)-L-threonylcarbamoyladenosine(37) in tRNA + (sulfur carrier)-H + 5'-deoxyadenosine + L-methionine + A + S-adenosyl-L-homocysteine + 2 H(+)</text>
        <dbReference type="Rhea" id="RHEA:37075"/>
        <dbReference type="Rhea" id="RHEA-COMP:10163"/>
        <dbReference type="Rhea" id="RHEA-COMP:11092"/>
        <dbReference type="Rhea" id="RHEA-COMP:14737"/>
        <dbReference type="Rhea" id="RHEA-COMP:14739"/>
        <dbReference type="ChEBI" id="CHEBI:13193"/>
        <dbReference type="ChEBI" id="CHEBI:15378"/>
        <dbReference type="ChEBI" id="CHEBI:17319"/>
        <dbReference type="ChEBI" id="CHEBI:17499"/>
        <dbReference type="ChEBI" id="CHEBI:29917"/>
        <dbReference type="ChEBI" id="CHEBI:57844"/>
        <dbReference type="ChEBI" id="CHEBI:57856"/>
        <dbReference type="ChEBI" id="CHEBI:59789"/>
        <dbReference type="ChEBI" id="CHEBI:64428"/>
        <dbReference type="ChEBI" id="CHEBI:74418"/>
        <dbReference type="ChEBI" id="CHEBI:74420"/>
        <dbReference type="EC" id="2.8.4.5"/>
    </reaction>
</comment>
<comment type="cofactor">
    <cofactor evidence="3">
        <name>[4Fe-4S] cluster</name>
        <dbReference type="ChEBI" id="CHEBI:49883"/>
    </cofactor>
    <text evidence="3">Binds 2 [4Fe-4S] clusters. One cluster is coordinated with 3 cysteines and an exchangeable S-adenosyl-L-methionine.</text>
</comment>
<comment type="similarity">
    <text evidence="5">Belongs to the methylthiotransferase family. CDKAL1 subfamily.</text>
</comment>
<comment type="sequence caution" evidence="5">
    <conflict type="erroneous initiation">
        <sequence resource="EMBL-CDS" id="BAA30997"/>
    </conflict>
    <text>Extended N-terminus.</text>
</comment>
<accession>O59545</accession>
<keyword id="KW-0004">4Fe-4S</keyword>
<keyword id="KW-0408">Iron</keyword>
<keyword id="KW-0411">Iron-sulfur</keyword>
<keyword id="KW-0479">Metal-binding</keyword>
<keyword id="KW-0949">S-adenosyl-L-methionine</keyword>
<keyword id="KW-0808">Transferase</keyword>
<keyword id="KW-0819">tRNA processing</keyword>
<sequence length="425" mass="48633">MVKVYIENYGCARNRADGEIMAALLYLSGHEIVESPEESEIVVVNSCAVKDPTERKIARRIRELLDNGKKVIVTGCLPHVNPDVIDERVSAILGVKSIDRIVQAVEYAMRGEKLISVPDWKKRNLDKLDFPRLSPRNVYFILPIAEGCLNACTYCATRLARGVLKSYSPEKIIGWVKWAIKQGYKEIWLSAEDTGCYGFDIGTNLAKLIDEITAIEGEFRIRVGMMNPNHVLKFLDELIDAYKDEKVYKFLHLPVQSGDNEILRKMGRMYTVEEFEEIVKAFRREFPELNLHTDIIVGFPGESEEAFQRSVELIKRIRPDKVNVSRYSPRPGTIAAKWKQLPGWVVKERSRLLHRIRLQISYEINRKYIGKKVKVLIHGEGKKGNVDAVTMNYKHIILPEGRKGEFREARVKNAASTYLLGEIIT</sequence>
<gene>
    <name type="ordered locus">PH1875</name>
</gene>
<organism>
    <name type="scientific">Pyrococcus horikoshii (strain ATCC 700860 / DSM 12428 / JCM 9974 / NBRC 100139 / OT-3)</name>
    <dbReference type="NCBI Taxonomy" id="70601"/>
    <lineage>
        <taxon>Archaea</taxon>
        <taxon>Methanobacteriati</taxon>
        <taxon>Methanobacteriota</taxon>
        <taxon>Thermococci</taxon>
        <taxon>Thermococcales</taxon>
        <taxon>Thermococcaceae</taxon>
        <taxon>Pyrococcus</taxon>
    </lineage>
</organism>
<protein>
    <recommendedName>
        <fullName>Probable threonylcarbamoyladenosine tRNA methylthiotransferase</fullName>
        <ecNumber>2.8.4.5</ecNumber>
    </recommendedName>
    <alternativeName>
        <fullName>tRNA-t(6)A37 methylthiotransferase</fullName>
    </alternativeName>
</protein>
<proteinExistence type="inferred from homology"/>
<name>AMTAB_PYRHO</name>
<reference key="1">
    <citation type="journal article" date="1998" name="DNA Res.">
        <title>Complete sequence and gene organization of the genome of a hyper-thermophilic archaebacterium, Pyrococcus horikoshii OT3.</title>
        <authorList>
            <person name="Kawarabayasi Y."/>
            <person name="Sawada M."/>
            <person name="Horikawa H."/>
            <person name="Haikawa Y."/>
            <person name="Hino Y."/>
            <person name="Yamamoto S."/>
            <person name="Sekine M."/>
            <person name="Baba S."/>
            <person name="Kosugi H."/>
            <person name="Hosoyama A."/>
            <person name="Nagai Y."/>
            <person name="Sakai M."/>
            <person name="Ogura K."/>
            <person name="Otsuka R."/>
            <person name="Nakazawa H."/>
            <person name="Takamiya M."/>
            <person name="Ohfuku Y."/>
            <person name="Funahashi T."/>
            <person name="Tanaka T."/>
            <person name="Kudoh Y."/>
            <person name="Yamazaki J."/>
            <person name="Kushida N."/>
            <person name="Oguchi A."/>
            <person name="Aoki K."/>
            <person name="Yoshizawa T."/>
            <person name="Nakamura Y."/>
            <person name="Robb F.T."/>
            <person name="Horikoshi K."/>
            <person name="Masuchi Y."/>
            <person name="Shizuya H."/>
            <person name="Kikuchi H."/>
        </authorList>
    </citation>
    <scope>NUCLEOTIDE SEQUENCE [LARGE SCALE GENOMIC DNA]</scope>
    <source>
        <strain>ATCC 700860 / DSM 12428 / JCM 9974 / NBRC 100139 / OT-3</strain>
    </source>
</reference>
<evidence type="ECO:0000250" key="1">
    <source>
        <dbReference type="UniProtKB" id="Q5VV42"/>
    </source>
</evidence>
<evidence type="ECO:0000255" key="2">
    <source>
        <dbReference type="PROSITE-ProRule" id="PRU00208"/>
    </source>
</evidence>
<evidence type="ECO:0000255" key="3">
    <source>
        <dbReference type="PROSITE-ProRule" id="PRU00780"/>
    </source>
</evidence>
<evidence type="ECO:0000255" key="4">
    <source>
        <dbReference type="PROSITE-ProRule" id="PRU01266"/>
    </source>
</evidence>
<evidence type="ECO:0000305" key="5"/>
<feature type="chain" id="PRO_0000141763" description="Probable threonylcarbamoyladenosine tRNA methylthiotransferase">
    <location>
        <begin position="1"/>
        <end position="425"/>
    </location>
</feature>
<feature type="domain" description="MTTase N-terminal" evidence="3">
    <location>
        <begin position="2"/>
        <end position="110"/>
    </location>
</feature>
<feature type="domain" description="Radical SAM core" evidence="4">
    <location>
        <begin position="134"/>
        <end position="363"/>
    </location>
</feature>
<feature type="domain" description="TRAM" evidence="2">
    <location>
        <begin position="366"/>
        <end position="425"/>
    </location>
</feature>
<feature type="binding site" evidence="3">
    <location>
        <position position="11"/>
    </location>
    <ligand>
        <name>[4Fe-4S] cluster</name>
        <dbReference type="ChEBI" id="CHEBI:49883"/>
        <label>1</label>
    </ligand>
</feature>
<feature type="binding site" evidence="3">
    <location>
        <position position="47"/>
    </location>
    <ligand>
        <name>[4Fe-4S] cluster</name>
        <dbReference type="ChEBI" id="CHEBI:49883"/>
        <label>1</label>
    </ligand>
</feature>
<feature type="binding site" evidence="3">
    <location>
        <position position="76"/>
    </location>
    <ligand>
        <name>[4Fe-4S] cluster</name>
        <dbReference type="ChEBI" id="CHEBI:49883"/>
        <label>1</label>
    </ligand>
</feature>
<feature type="binding site" evidence="3">
    <location>
        <position position="148"/>
    </location>
    <ligand>
        <name>[4Fe-4S] cluster</name>
        <dbReference type="ChEBI" id="CHEBI:49883"/>
        <label>2</label>
        <note>4Fe-4S-S-AdoMet</note>
    </ligand>
</feature>
<feature type="binding site" evidence="3">
    <location>
        <position position="152"/>
    </location>
    <ligand>
        <name>[4Fe-4S] cluster</name>
        <dbReference type="ChEBI" id="CHEBI:49883"/>
        <label>2</label>
        <note>4Fe-4S-S-AdoMet</note>
    </ligand>
</feature>
<feature type="binding site" evidence="3">
    <location>
        <position position="155"/>
    </location>
    <ligand>
        <name>[4Fe-4S] cluster</name>
        <dbReference type="ChEBI" id="CHEBI:49883"/>
        <label>2</label>
        <note>4Fe-4S-S-AdoMet</note>
    </ligand>
</feature>